<accession>A1RP81</accession>
<organism>
    <name type="scientific">Shewanella sp. (strain W3-18-1)</name>
    <dbReference type="NCBI Taxonomy" id="351745"/>
    <lineage>
        <taxon>Bacteria</taxon>
        <taxon>Pseudomonadati</taxon>
        <taxon>Pseudomonadota</taxon>
        <taxon>Gammaproteobacteria</taxon>
        <taxon>Alteromonadales</taxon>
        <taxon>Shewanellaceae</taxon>
        <taxon>Shewanella</taxon>
    </lineage>
</organism>
<sequence length="79" mass="8434">MGGISIWQLLIIALIVVLLFGTKKLRSLGGDLGGAVKGFKNAMSSEEDKKALEDTEAAKTAQTTQQATEKKPESNKEQA</sequence>
<keyword id="KW-0997">Cell inner membrane</keyword>
<keyword id="KW-1003">Cell membrane</keyword>
<keyword id="KW-0472">Membrane</keyword>
<keyword id="KW-0653">Protein transport</keyword>
<keyword id="KW-0811">Translocation</keyword>
<keyword id="KW-0812">Transmembrane</keyword>
<keyword id="KW-1133">Transmembrane helix</keyword>
<keyword id="KW-0813">Transport</keyword>
<reference key="1">
    <citation type="submission" date="2006-12" db="EMBL/GenBank/DDBJ databases">
        <title>Complete sequence of Shewanella sp. W3-18-1.</title>
        <authorList>
            <consortium name="US DOE Joint Genome Institute"/>
            <person name="Copeland A."/>
            <person name="Lucas S."/>
            <person name="Lapidus A."/>
            <person name="Barry K."/>
            <person name="Detter J.C."/>
            <person name="Glavina del Rio T."/>
            <person name="Hammon N."/>
            <person name="Israni S."/>
            <person name="Dalin E."/>
            <person name="Tice H."/>
            <person name="Pitluck S."/>
            <person name="Chain P."/>
            <person name="Malfatti S."/>
            <person name="Shin M."/>
            <person name="Vergez L."/>
            <person name="Schmutz J."/>
            <person name="Larimer F."/>
            <person name="Land M."/>
            <person name="Hauser L."/>
            <person name="Kyrpides N."/>
            <person name="Lykidis A."/>
            <person name="Tiedje J."/>
            <person name="Richardson P."/>
        </authorList>
    </citation>
    <scope>NUCLEOTIDE SEQUENCE [LARGE SCALE GENOMIC DNA]</scope>
    <source>
        <strain>W3-18-1</strain>
    </source>
</reference>
<feature type="chain" id="PRO_1000044448" description="Sec-independent protein translocase protein TatA">
    <location>
        <begin position="1"/>
        <end position="79"/>
    </location>
</feature>
<feature type="transmembrane region" description="Helical" evidence="1">
    <location>
        <begin position="1"/>
        <end position="21"/>
    </location>
</feature>
<feature type="region of interest" description="Disordered" evidence="2">
    <location>
        <begin position="43"/>
        <end position="79"/>
    </location>
</feature>
<feature type="compositionally biased region" description="Basic and acidic residues" evidence="2">
    <location>
        <begin position="46"/>
        <end position="57"/>
    </location>
</feature>
<feature type="compositionally biased region" description="Low complexity" evidence="2">
    <location>
        <begin position="58"/>
        <end position="67"/>
    </location>
</feature>
<feature type="compositionally biased region" description="Basic and acidic residues" evidence="2">
    <location>
        <begin position="68"/>
        <end position="79"/>
    </location>
</feature>
<proteinExistence type="inferred from homology"/>
<dbReference type="EMBL" id="CP000503">
    <property type="protein sequence ID" value="ABM26476.1"/>
    <property type="molecule type" value="Genomic_DNA"/>
</dbReference>
<dbReference type="RefSeq" id="WP_011790907.1">
    <property type="nucleotide sequence ID" value="NC_008750.1"/>
</dbReference>
<dbReference type="SMR" id="A1RP81"/>
<dbReference type="GeneID" id="67441969"/>
<dbReference type="KEGG" id="shw:Sputw3181_3667"/>
<dbReference type="HOGENOM" id="CLU_086034_5_1_6"/>
<dbReference type="Proteomes" id="UP000002597">
    <property type="component" value="Chromosome"/>
</dbReference>
<dbReference type="GO" id="GO:0033281">
    <property type="term" value="C:TAT protein transport complex"/>
    <property type="evidence" value="ECO:0007669"/>
    <property type="project" value="UniProtKB-UniRule"/>
</dbReference>
<dbReference type="GO" id="GO:0008320">
    <property type="term" value="F:protein transmembrane transporter activity"/>
    <property type="evidence" value="ECO:0007669"/>
    <property type="project" value="UniProtKB-UniRule"/>
</dbReference>
<dbReference type="GO" id="GO:0043953">
    <property type="term" value="P:protein transport by the Tat complex"/>
    <property type="evidence" value="ECO:0007669"/>
    <property type="project" value="UniProtKB-UniRule"/>
</dbReference>
<dbReference type="Gene3D" id="1.20.5.3310">
    <property type="match status" value="1"/>
</dbReference>
<dbReference type="HAMAP" id="MF_00236">
    <property type="entry name" value="TatA_E"/>
    <property type="match status" value="1"/>
</dbReference>
<dbReference type="InterPro" id="IPR003369">
    <property type="entry name" value="TatA/B/E"/>
</dbReference>
<dbReference type="InterPro" id="IPR006312">
    <property type="entry name" value="TatA/E"/>
</dbReference>
<dbReference type="NCBIfam" id="NF002813">
    <property type="entry name" value="PRK02958.1"/>
    <property type="match status" value="1"/>
</dbReference>
<dbReference type="NCBIfam" id="TIGR01411">
    <property type="entry name" value="tatAE"/>
    <property type="match status" value="1"/>
</dbReference>
<dbReference type="PANTHER" id="PTHR42982">
    <property type="entry name" value="SEC-INDEPENDENT PROTEIN TRANSLOCASE PROTEIN TATA"/>
    <property type="match status" value="1"/>
</dbReference>
<dbReference type="PANTHER" id="PTHR42982:SF1">
    <property type="entry name" value="SEC-INDEPENDENT PROTEIN TRANSLOCASE PROTEIN TATA"/>
    <property type="match status" value="1"/>
</dbReference>
<dbReference type="Pfam" id="PF02416">
    <property type="entry name" value="TatA_B_E"/>
    <property type="match status" value="1"/>
</dbReference>
<protein>
    <recommendedName>
        <fullName evidence="1">Sec-independent protein translocase protein TatA</fullName>
    </recommendedName>
</protein>
<name>TATA_SHESW</name>
<comment type="function">
    <text evidence="1">Part of the twin-arginine translocation (Tat) system that transports large folded proteins containing a characteristic twin-arginine motif in their signal peptide across membranes. TatA could form the protein-conducting channel of the Tat system.</text>
</comment>
<comment type="subunit">
    <text evidence="1">The Tat system comprises two distinct complexes: a TatABC complex, containing multiple copies of TatA, TatB and TatC subunits, and a separate TatA complex, containing only TatA subunits. Substrates initially bind to the TatABC complex, which probably triggers association of the separate TatA complex to form the active translocon.</text>
</comment>
<comment type="subcellular location">
    <subcellularLocation>
        <location evidence="1">Cell inner membrane</location>
        <topology evidence="1">Single-pass membrane protein</topology>
    </subcellularLocation>
</comment>
<comment type="similarity">
    <text evidence="1">Belongs to the TatA/E family.</text>
</comment>
<gene>
    <name evidence="1" type="primary">tatA</name>
    <name type="ordered locus">Sputw3181_3667</name>
</gene>
<evidence type="ECO:0000255" key="1">
    <source>
        <dbReference type="HAMAP-Rule" id="MF_00236"/>
    </source>
</evidence>
<evidence type="ECO:0000256" key="2">
    <source>
        <dbReference type="SAM" id="MobiDB-lite"/>
    </source>
</evidence>